<accession>Q9PRP8</accession>
<comment type="function">
    <text evidence="3">Calcium-dependent prothrombin activator. This protein may activate prothrombin via recognition by the regulatory subunit of the calcium ion bound conformation of its gamma-carboxyglutamic acid (GLA) domain, and the subsequent conversion of prothrombin to active thrombin is catalyzed by the catalytic subunit.</text>
</comment>
<comment type="subunit">
    <text evidence="3">Heterodimer of a metalloproteinase subunit and a regulatory subunit comprising two polypeptides disulfide-linked (14 kDa and 17 kDa chains).</text>
</comment>
<comment type="subcellular location">
    <subcellularLocation>
        <location>Secreted</location>
    </subcellularLocation>
</comment>
<comment type="tissue specificity">
    <text>Expressed by the venom gland.</text>
</comment>
<comment type="biotechnology">
    <text evidence="2">Used for quantification of normal prothrombin (CA-1 method).</text>
</comment>
<comment type="similarity">
    <text evidence="4">Belongs to the snaclec family.</text>
</comment>
<reference key="1">
    <citation type="journal article" date="1996" name="J. Biol. Chem.">
        <title>Isolation and characterization of carinactivase, a novel prothrombin activator in Echis carinatus venom with a unique catalytic mechanism.</title>
        <authorList>
            <person name="Yamada D."/>
            <person name="Sekiya F."/>
            <person name="Morita T."/>
        </authorList>
    </citation>
    <scope>PROTEIN SEQUENCE</scope>
    <scope>FUNCTION</scope>
    <scope>SUBUNIT</scope>
    <source>
        <tissue>Venom</tissue>
    </source>
</reference>
<reference key="2">
    <citation type="journal article" date="1999" name="Thromb. Res.">
        <title>CA-1 method, a novel assay for quantification of normal prothrombin using a Ca2+ -dependent prothrombin activator, carinactivase-1.</title>
        <authorList>
            <person name="Yamada D."/>
            <person name="Morita T."/>
        </authorList>
    </citation>
    <scope>BIOTECHNOLOGY</scope>
</reference>
<feature type="chain" id="PRO_0000326261" description="Snaclec carinactivase-1 regulatory subunit 17 kDa chain">
    <location>
        <begin position="1"/>
        <end position="30" status="greater than"/>
    </location>
</feature>
<feature type="domain" description="C-type lectin" evidence="1">
    <location>
        <begin position="1"/>
        <end position="30" status="greater than"/>
    </location>
</feature>
<feature type="disulfide bond" evidence="1">
    <location>
        <begin position="2"/>
        <end position="13"/>
    </location>
</feature>
<feature type="non-terminal residue">
    <location>
        <position position="30"/>
    </location>
</feature>
<evidence type="ECO:0000255" key="1">
    <source>
        <dbReference type="PROSITE-ProRule" id="PRU00040"/>
    </source>
</evidence>
<evidence type="ECO:0000269" key="2">
    <source>
    </source>
</evidence>
<evidence type="ECO:0000269" key="3">
    <source>
    </source>
</evidence>
<evidence type="ECO:0000305" key="4"/>
<sequence>DCLPGWSSHEGHCYKVFNQEMYWADAEKFC</sequence>
<protein>
    <recommendedName>
        <fullName>Snaclec carinactivase-1 regulatory subunit 17 kDa chain</fullName>
        <shortName>CA-1 17 kDa subunit</shortName>
    </recommendedName>
    <alternativeName>
        <fullName>CA-1 25 kDa subunit chain 2</fullName>
    </alternativeName>
</protein>
<name>SL117_ECHCA</name>
<dbReference type="SMR" id="Q9PRP8"/>
<dbReference type="GO" id="GO:0005576">
    <property type="term" value="C:extracellular region"/>
    <property type="evidence" value="ECO:0007669"/>
    <property type="project" value="UniProtKB-SubCell"/>
</dbReference>
<dbReference type="GO" id="GO:0016504">
    <property type="term" value="F:peptidase activator activity"/>
    <property type="evidence" value="ECO:0007669"/>
    <property type="project" value="UniProtKB-KW"/>
</dbReference>
<dbReference type="GO" id="GO:0090729">
    <property type="term" value="F:toxin activity"/>
    <property type="evidence" value="ECO:0007669"/>
    <property type="project" value="UniProtKB-KW"/>
</dbReference>
<dbReference type="Gene3D" id="3.10.100.10">
    <property type="entry name" value="Mannose-Binding Protein A, subunit A"/>
    <property type="match status" value="1"/>
</dbReference>
<dbReference type="InterPro" id="IPR016186">
    <property type="entry name" value="C-type_lectin-like/link_sf"/>
</dbReference>
<dbReference type="InterPro" id="IPR016187">
    <property type="entry name" value="CTDL_fold"/>
</dbReference>
<dbReference type="SUPFAM" id="SSF56436">
    <property type="entry name" value="C-type lectin-like"/>
    <property type="match status" value="1"/>
</dbReference>
<keyword id="KW-1204">Blood coagulation cascade activating toxin</keyword>
<keyword id="KW-0106">Calcium</keyword>
<keyword id="KW-1217">Cell adhesion impairing toxin</keyword>
<keyword id="KW-0903">Direct protein sequencing</keyword>
<keyword id="KW-1015">Disulfide bond</keyword>
<keyword id="KW-1199">Hemostasis impairing toxin</keyword>
<keyword id="KW-0655">Prothrombin activator</keyword>
<keyword id="KW-0964">Secreted</keyword>
<keyword id="KW-0800">Toxin</keyword>
<organism>
    <name type="scientific">Echis carinatus</name>
    <name type="common">Saw-scaled viper</name>
    <dbReference type="NCBI Taxonomy" id="40353"/>
    <lineage>
        <taxon>Eukaryota</taxon>
        <taxon>Metazoa</taxon>
        <taxon>Chordata</taxon>
        <taxon>Craniata</taxon>
        <taxon>Vertebrata</taxon>
        <taxon>Euteleostomi</taxon>
        <taxon>Lepidosauria</taxon>
        <taxon>Squamata</taxon>
        <taxon>Bifurcata</taxon>
        <taxon>Unidentata</taxon>
        <taxon>Episquamata</taxon>
        <taxon>Toxicofera</taxon>
        <taxon>Serpentes</taxon>
        <taxon>Colubroidea</taxon>
        <taxon>Viperidae</taxon>
        <taxon>Viperinae</taxon>
        <taxon>Echis</taxon>
    </lineage>
</organism>
<proteinExistence type="evidence at protein level"/>